<keyword id="KW-1185">Reference proteome</keyword>
<keyword id="KW-0687">Ribonucleoprotein</keyword>
<keyword id="KW-0689">Ribosomal protein</keyword>
<keyword id="KW-0694">RNA-binding</keyword>
<keyword id="KW-0699">rRNA-binding</keyword>
<evidence type="ECO:0000255" key="1">
    <source>
        <dbReference type="HAMAP-Rule" id="MF_01341"/>
    </source>
</evidence>
<evidence type="ECO:0000256" key="2">
    <source>
        <dbReference type="SAM" id="MobiDB-lite"/>
    </source>
</evidence>
<evidence type="ECO:0000305" key="3"/>
<feature type="chain" id="PRO_1000054533" description="Large ribosomal subunit protein uL15">
    <location>
        <begin position="1"/>
        <end position="149"/>
    </location>
</feature>
<feature type="region of interest" description="Disordered" evidence="2">
    <location>
        <begin position="1"/>
        <end position="54"/>
    </location>
</feature>
<feature type="compositionally biased region" description="Basic and acidic residues" evidence="2">
    <location>
        <begin position="1"/>
        <end position="28"/>
    </location>
</feature>
<accession>A4FPK6</accession>
<organism>
    <name type="scientific">Saccharopolyspora erythraea (strain ATCC 11635 / DSM 40517 / JCM 4748 / NBRC 13426 / NCIMB 8594 / NRRL 2338)</name>
    <dbReference type="NCBI Taxonomy" id="405948"/>
    <lineage>
        <taxon>Bacteria</taxon>
        <taxon>Bacillati</taxon>
        <taxon>Actinomycetota</taxon>
        <taxon>Actinomycetes</taxon>
        <taxon>Pseudonocardiales</taxon>
        <taxon>Pseudonocardiaceae</taxon>
        <taxon>Saccharopolyspora</taxon>
    </lineage>
</organism>
<sequence>MVIKIHDLRPAPGSKRDKIRVGRGEGSKGKTAGRGTKGTKARKNVSPRFEGGQMPIHMRLPKLRGFKNRFRTEFHGVNVGKLAAAFPQGGTVGIDELISAGLANKGELVKILGDGDLEGVKLEVTAHAFTGSAQEKITAAGGSVTKLDR</sequence>
<comment type="function">
    <text evidence="1">Binds to the 23S rRNA.</text>
</comment>
<comment type="subunit">
    <text evidence="1">Part of the 50S ribosomal subunit.</text>
</comment>
<comment type="similarity">
    <text evidence="1">Belongs to the universal ribosomal protein uL15 family.</text>
</comment>
<dbReference type="EMBL" id="AM420293">
    <property type="protein sequence ID" value="CAM05981.1"/>
    <property type="molecule type" value="Genomic_DNA"/>
</dbReference>
<dbReference type="RefSeq" id="WP_009948652.1">
    <property type="nucleotide sequence ID" value="NC_009142.1"/>
</dbReference>
<dbReference type="SMR" id="A4FPK6"/>
<dbReference type="STRING" id="405948.SACE_6817"/>
<dbReference type="KEGG" id="sen:SACE_6817"/>
<dbReference type="eggNOG" id="COG0200">
    <property type="taxonomic scope" value="Bacteria"/>
</dbReference>
<dbReference type="HOGENOM" id="CLU_055188_4_1_11"/>
<dbReference type="OrthoDB" id="9810293at2"/>
<dbReference type="Proteomes" id="UP000006728">
    <property type="component" value="Chromosome"/>
</dbReference>
<dbReference type="GO" id="GO:0022625">
    <property type="term" value="C:cytosolic large ribosomal subunit"/>
    <property type="evidence" value="ECO:0007669"/>
    <property type="project" value="TreeGrafter"/>
</dbReference>
<dbReference type="GO" id="GO:0019843">
    <property type="term" value="F:rRNA binding"/>
    <property type="evidence" value="ECO:0007669"/>
    <property type="project" value="UniProtKB-UniRule"/>
</dbReference>
<dbReference type="GO" id="GO:0003735">
    <property type="term" value="F:structural constituent of ribosome"/>
    <property type="evidence" value="ECO:0007669"/>
    <property type="project" value="InterPro"/>
</dbReference>
<dbReference type="GO" id="GO:0006412">
    <property type="term" value="P:translation"/>
    <property type="evidence" value="ECO:0007669"/>
    <property type="project" value="UniProtKB-UniRule"/>
</dbReference>
<dbReference type="Gene3D" id="3.100.10.10">
    <property type="match status" value="1"/>
</dbReference>
<dbReference type="HAMAP" id="MF_01341">
    <property type="entry name" value="Ribosomal_uL15"/>
    <property type="match status" value="1"/>
</dbReference>
<dbReference type="InterPro" id="IPR030878">
    <property type="entry name" value="Ribosomal_uL15"/>
</dbReference>
<dbReference type="InterPro" id="IPR021131">
    <property type="entry name" value="Ribosomal_uL15/eL18"/>
</dbReference>
<dbReference type="InterPro" id="IPR036227">
    <property type="entry name" value="Ribosomal_uL15/eL18_sf"/>
</dbReference>
<dbReference type="InterPro" id="IPR005749">
    <property type="entry name" value="Ribosomal_uL15_bac-type"/>
</dbReference>
<dbReference type="InterPro" id="IPR001196">
    <property type="entry name" value="Ribosomal_uL15_CS"/>
</dbReference>
<dbReference type="NCBIfam" id="TIGR01071">
    <property type="entry name" value="rplO_bact"/>
    <property type="match status" value="1"/>
</dbReference>
<dbReference type="PANTHER" id="PTHR12934">
    <property type="entry name" value="50S RIBOSOMAL PROTEIN L15"/>
    <property type="match status" value="1"/>
</dbReference>
<dbReference type="PANTHER" id="PTHR12934:SF11">
    <property type="entry name" value="LARGE RIBOSOMAL SUBUNIT PROTEIN UL15M"/>
    <property type="match status" value="1"/>
</dbReference>
<dbReference type="Pfam" id="PF00828">
    <property type="entry name" value="Ribosomal_L27A"/>
    <property type="match status" value="1"/>
</dbReference>
<dbReference type="SUPFAM" id="SSF52080">
    <property type="entry name" value="Ribosomal proteins L15p and L18e"/>
    <property type="match status" value="1"/>
</dbReference>
<dbReference type="PROSITE" id="PS00475">
    <property type="entry name" value="RIBOSOMAL_L15"/>
    <property type="match status" value="1"/>
</dbReference>
<gene>
    <name evidence="1" type="primary">rplO</name>
    <name type="ordered locus">SACE_6817</name>
</gene>
<proteinExistence type="inferred from homology"/>
<reference key="1">
    <citation type="journal article" date="2007" name="Nat. Biotechnol.">
        <title>Complete genome sequence of the erythromycin-producing bacterium Saccharopolyspora erythraea NRRL23338.</title>
        <authorList>
            <person name="Oliynyk M."/>
            <person name="Samborskyy M."/>
            <person name="Lester J.B."/>
            <person name="Mironenko T."/>
            <person name="Scott N."/>
            <person name="Dickens S."/>
            <person name="Haydock S.F."/>
            <person name="Leadlay P.F."/>
        </authorList>
    </citation>
    <scope>NUCLEOTIDE SEQUENCE [LARGE SCALE GENOMIC DNA]</scope>
    <source>
        <strain>ATCC 11635 / DSM 40517 / JCM 4748 / NBRC 13426 / NCIMB 8594 / NRRL 2338</strain>
    </source>
</reference>
<name>RL15_SACEN</name>
<protein>
    <recommendedName>
        <fullName evidence="1">Large ribosomal subunit protein uL15</fullName>
    </recommendedName>
    <alternativeName>
        <fullName evidence="3">50S ribosomal protein L15</fullName>
    </alternativeName>
</protein>